<reference key="1">
    <citation type="journal article" date="2007" name="Science">
        <title>The Fusarium graminearum genome reveals a link between localized polymorphism and pathogen specialization.</title>
        <authorList>
            <person name="Cuomo C.A."/>
            <person name="Gueldener U."/>
            <person name="Xu J.-R."/>
            <person name="Trail F."/>
            <person name="Turgeon B.G."/>
            <person name="Di Pietro A."/>
            <person name="Walton J.D."/>
            <person name="Ma L.-J."/>
            <person name="Baker S.E."/>
            <person name="Rep M."/>
            <person name="Adam G."/>
            <person name="Antoniw J."/>
            <person name="Baldwin T."/>
            <person name="Calvo S.E."/>
            <person name="Chang Y.-L."/>
            <person name="DeCaprio D."/>
            <person name="Gale L.R."/>
            <person name="Gnerre S."/>
            <person name="Goswami R.S."/>
            <person name="Hammond-Kosack K."/>
            <person name="Harris L.J."/>
            <person name="Hilburn K."/>
            <person name="Kennell J.C."/>
            <person name="Kroken S."/>
            <person name="Magnuson J.K."/>
            <person name="Mannhaupt G."/>
            <person name="Mauceli E.W."/>
            <person name="Mewes H.-W."/>
            <person name="Mitterbauer R."/>
            <person name="Muehlbauer G."/>
            <person name="Muensterkoetter M."/>
            <person name="Nelson D."/>
            <person name="O'Donnell K."/>
            <person name="Ouellet T."/>
            <person name="Qi W."/>
            <person name="Quesneville H."/>
            <person name="Roncero M.I.G."/>
            <person name="Seong K.-Y."/>
            <person name="Tetko I.V."/>
            <person name="Urban M."/>
            <person name="Waalwijk C."/>
            <person name="Ward T.J."/>
            <person name="Yao J."/>
            <person name="Birren B.W."/>
            <person name="Kistler H.C."/>
        </authorList>
    </citation>
    <scope>NUCLEOTIDE SEQUENCE [LARGE SCALE GENOMIC DNA]</scope>
    <source>
        <strain>ATCC MYA-4620 / CBS 123657 / FGSC 9075 / NRRL 31084 / PH-1</strain>
    </source>
</reference>
<reference key="2">
    <citation type="journal article" date="2010" name="Nature">
        <title>Comparative genomics reveals mobile pathogenicity chromosomes in Fusarium.</title>
        <authorList>
            <person name="Ma L.-J."/>
            <person name="van der Does H.C."/>
            <person name="Borkovich K.A."/>
            <person name="Coleman J.J."/>
            <person name="Daboussi M.-J."/>
            <person name="Di Pietro A."/>
            <person name="Dufresne M."/>
            <person name="Freitag M."/>
            <person name="Grabherr M."/>
            <person name="Henrissat B."/>
            <person name="Houterman P.M."/>
            <person name="Kang S."/>
            <person name="Shim W.-B."/>
            <person name="Woloshuk C."/>
            <person name="Xie X."/>
            <person name="Xu J.-R."/>
            <person name="Antoniw J."/>
            <person name="Baker S.E."/>
            <person name="Bluhm B.H."/>
            <person name="Breakspear A."/>
            <person name="Brown D.W."/>
            <person name="Butchko R.A.E."/>
            <person name="Chapman S."/>
            <person name="Coulson R."/>
            <person name="Coutinho P.M."/>
            <person name="Danchin E.G.J."/>
            <person name="Diener A."/>
            <person name="Gale L.R."/>
            <person name="Gardiner D.M."/>
            <person name="Goff S."/>
            <person name="Hammond-Kosack K.E."/>
            <person name="Hilburn K."/>
            <person name="Hua-Van A."/>
            <person name="Jonkers W."/>
            <person name="Kazan K."/>
            <person name="Kodira C.D."/>
            <person name="Koehrsen M."/>
            <person name="Kumar L."/>
            <person name="Lee Y.-H."/>
            <person name="Li L."/>
            <person name="Manners J.M."/>
            <person name="Miranda-Saavedra D."/>
            <person name="Mukherjee M."/>
            <person name="Park G."/>
            <person name="Park J."/>
            <person name="Park S.-Y."/>
            <person name="Proctor R.H."/>
            <person name="Regev A."/>
            <person name="Ruiz-Roldan M.C."/>
            <person name="Sain D."/>
            <person name="Sakthikumar S."/>
            <person name="Sykes S."/>
            <person name="Schwartz D.C."/>
            <person name="Turgeon B.G."/>
            <person name="Wapinski I."/>
            <person name="Yoder O."/>
            <person name="Young S."/>
            <person name="Zeng Q."/>
            <person name="Zhou S."/>
            <person name="Galagan J."/>
            <person name="Cuomo C.A."/>
            <person name="Kistler H.C."/>
            <person name="Rep M."/>
        </authorList>
    </citation>
    <scope>GENOME REANNOTATION</scope>
    <source>
        <strain>ATCC MYA-4620 / CBS 123657 / FGSC 9075 / NRRL 31084 / PH-1</strain>
    </source>
</reference>
<reference key="3">
    <citation type="journal article" date="2015" name="BMC Genomics">
        <title>The completed genome sequence of the pathogenic ascomycete fungus Fusarium graminearum.</title>
        <authorList>
            <person name="King R."/>
            <person name="Urban M."/>
            <person name="Hammond-Kosack M.C.U."/>
            <person name="Hassani-Pak K."/>
            <person name="Hammond-Kosack K.E."/>
        </authorList>
    </citation>
    <scope>NUCLEOTIDE SEQUENCE [LARGE SCALE GENOMIC DNA]</scope>
    <source>
        <strain>ATCC MYA-4620 / CBS 123657 / FGSC 9075 / NRRL 31084 / PH-1</strain>
    </source>
</reference>
<feature type="chain" id="PRO_0000283686" description="Sulfate adenylyltransferase">
    <location>
        <begin position="1"/>
        <end position="574"/>
    </location>
</feature>
<feature type="region of interest" description="N-terminal" evidence="1">
    <location>
        <begin position="1"/>
        <end position="170"/>
    </location>
</feature>
<feature type="region of interest" description="Catalytic" evidence="1">
    <location>
        <begin position="171"/>
        <end position="395"/>
    </location>
</feature>
<feature type="region of interest" description="Allosteric regulation domain; adenylyl-sulfate kinase-like" evidence="1">
    <location>
        <begin position="396"/>
        <end position="574"/>
    </location>
</feature>
<feature type="active site" evidence="1">
    <location>
        <position position="199"/>
    </location>
</feature>
<feature type="active site" evidence="1">
    <location>
        <position position="200"/>
    </location>
</feature>
<feature type="active site" evidence="1">
    <location>
        <position position="201"/>
    </location>
</feature>
<feature type="binding site" evidence="1">
    <location>
        <begin position="198"/>
        <end position="201"/>
    </location>
    <ligand>
        <name>ATP</name>
        <dbReference type="ChEBI" id="CHEBI:30616"/>
    </ligand>
</feature>
<feature type="binding site" evidence="1">
    <location>
        <position position="198"/>
    </location>
    <ligand>
        <name>sulfate</name>
        <dbReference type="ChEBI" id="CHEBI:16189"/>
    </ligand>
</feature>
<feature type="binding site" evidence="1">
    <location>
        <position position="200"/>
    </location>
    <ligand>
        <name>sulfate</name>
        <dbReference type="ChEBI" id="CHEBI:16189"/>
    </ligand>
</feature>
<feature type="binding site" evidence="1">
    <location>
        <begin position="292"/>
        <end position="295"/>
    </location>
    <ligand>
        <name>ATP</name>
        <dbReference type="ChEBI" id="CHEBI:30616"/>
    </ligand>
</feature>
<feature type="binding site" evidence="1">
    <location>
        <position position="296"/>
    </location>
    <ligand>
        <name>sulfate</name>
        <dbReference type="ChEBI" id="CHEBI:16189"/>
    </ligand>
</feature>
<feature type="binding site" evidence="1">
    <location>
        <position position="334"/>
    </location>
    <ligand>
        <name>ATP</name>
        <dbReference type="ChEBI" id="CHEBI:30616"/>
    </ligand>
</feature>
<feature type="binding site" evidence="1">
    <location>
        <begin position="435"/>
        <end position="438"/>
    </location>
    <ligand>
        <name>3'-phosphoadenylyl sulfate</name>
        <dbReference type="ChEBI" id="CHEBI:58339"/>
        <note>allosteric inhibitor</note>
    </ligand>
</feature>
<feature type="binding site" evidence="1">
    <location>
        <position position="452"/>
    </location>
    <ligand>
        <name>3'-phosphoadenylyl sulfate</name>
        <dbReference type="ChEBI" id="CHEBI:58339"/>
        <note>allosteric inhibitor</note>
    </ligand>
</feature>
<feature type="binding site" evidence="1">
    <location>
        <begin position="478"/>
        <end position="479"/>
    </location>
    <ligand>
        <name>3'-phosphoadenylyl sulfate</name>
        <dbReference type="ChEBI" id="CHEBI:58339"/>
        <note>allosteric inhibitor</note>
    </ligand>
</feature>
<feature type="binding site" evidence="1">
    <location>
        <position position="516"/>
    </location>
    <ligand>
        <name>3'-phosphoadenylyl sulfate</name>
        <dbReference type="ChEBI" id="CHEBI:58339"/>
        <note>allosteric inhibitor</note>
    </ligand>
</feature>
<feature type="site" description="Transition state stabilizer" evidence="1">
    <location>
        <position position="204"/>
    </location>
</feature>
<feature type="site" description="Transition state stabilizer" evidence="1">
    <location>
        <position position="207"/>
    </location>
</feature>
<feature type="site" description="Induces change in substrate recognition on ATP binding" evidence="1">
    <location>
        <position position="331"/>
    </location>
</feature>
<gene>
    <name evidence="1" type="primary">MET3</name>
    <name type="ORF">FGRRES_08875</name>
    <name type="ORF">FGSG_08875</name>
</gene>
<protein>
    <recommendedName>
        <fullName evidence="1">Sulfate adenylyltransferase</fullName>
        <ecNumber evidence="1">2.7.7.4</ecNumber>
    </recommendedName>
    <alternativeName>
        <fullName evidence="1">ATP-sulfurylase</fullName>
    </alternativeName>
    <alternativeName>
        <fullName evidence="1">Sulfate adenylate transferase</fullName>
        <shortName evidence="1">SAT</shortName>
    </alternativeName>
</protein>
<accession>Q4I1N3</accession>
<accession>A0A0E0S1F8</accession>
<accession>V6RII3</accession>
<comment type="function">
    <text evidence="1">Catalyzes the first intracellular reaction of sulfate assimilation, forming adenosine-5'-phosphosulfate (APS) from inorganic sulfate and ATP. Plays an important role in sulfate activation as a component of the biosynthesis pathway of sulfur-containing amino acids.</text>
</comment>
<comment type="catalytic activity">
    <reaction evidence="1">
        <text>sulfate + ATP + H(+) = adenosine 5'-phosphosulfate + diphosphate</text>
        <dbReference type="Rhea" id="RHEA:18133"/>
        <dbReference type="ChEBI" id="CHEBI:15378"/>
        <dbReference type="ChEBI" id="CHEBI:16189"/>
        <dbReference type="ChEBI" id="CHEBI:30616"/>
        <dbReference type="ChEBI" id="CHEBI:33019"/>
        <dbReference type="ChEBI" id="CHEBI:58243"/>
        <dbReference type="EC" id="2.7.7.4"/>
    </reaction>
</comment>
<comment type="activity regulation">
    <text evidence="1">Allosterically inhibited by 3'-phosphoadenosine 5'-phosphosulfate (PAPS).</text>
</comment>
<comment type="pathway">
    <text evidence="1">Sulfur metabolism; hydrogen sulfide biosynthesis; sulfite from sulfate: step 1/3.</text>
</comment>
<comment type="subunit">
    <text evidence="1">Homohexamer. Dimer of trimers.</text>
</comment>
<comment type="subcellular location">
    <subcellularLocation>
        <location evidence="1">Cytoplasm</location>
    </subcellularLocation>
</comment>
<comment type="domain">
    <text evidence="1">The adenylyl-sulfate kinase (APS kinase) is non-functional. It is involved in allosteric regulation by PAPS. PAPS binding induces a large rotational rearrangement of domains lowering the substrate affinity of the enzyme.</text>
</comment>
<comment type="similarity">
    <text evidence="1">In the N-terminal section; belongs to the sulfate adenylyltransferase family.</text>
</comment>
<comment type="similarity">
    <text evidence="1">In the C-terminal section; belongs to the APS kinase family.</text>
</comment>
<proteinExistence type="inferred from homology"/>
<evidence type="ECO:0000255" key="1">
    <source>
        <dbReference type="HAMAP-Rule" id="MF_03106"/>
    </source>
</evidence>
<organism>
    <name type="scientific">Gibberella zeae (strain ATCC MYA-4620 / CBS 123657 / FGSC 9075 / NRRL 31084 / PH-1)</name>
    <name type="common">Wheat head blight fungus</name>
    <name type="synonym">Fusarium graminearum</name>
    <dbReference type="NCBI Taxonomy" id="229533"/>
    <lineage>
        <taxon>Eukaryota</taxon>
        <taxon>Fungi</taxon>
        <taxon>Dikarya</taxon>
        <taxon>Ascomycota</taxon>
        <taxon>Pezizomycotina</taxon>
        <taxon>Sordariomycetes</taxon>
        <taxon>Hypocreomycetidae</taxon>
        <taxon>Hypocreales</taxon>
        <taxon>Nectriaceae</taxon>
        <taxon>Fusarium</taxon>
    </lineage>
</organism>
<keyword id="KW-0021">Allosteric enzyme</keyword>
<keyword id="KW-0028">Amino-acid biosynthesis</keyword>
<keyword id="KW-0067">ATP-binding</keyword>
<keyword id="KW-0198">Cysteine biosynthesis</keyword>
<keyword id="KW-0963">Cytoplasm</keyword>
<keyword id="KW-0486">Methionine biosynthesis</keyword>
<keyword id="KW-0547">Nucleotide-binding</keyword>
<keyword id="KW-0548">Nucleotidyltransferase</keyword>
<keyword id="KW-1185">Reference proteome</keyword>
<keyword id="KW-0808">Transferase</keyword>
<dbReference type="EC" id="2.7.7.4" evidence="1"/>
<dbReference type="EMBL" id="DS231667">
    <property type="protein sequence ID" value="ESU14408.1"/>
    <property type="molecule type" value="Genomic_DNA"/>
</dbReference>
<dbReference type="EMBL" id="HG970333">
    <property type="protein sequence ID" value="CEF77333.1"/>
    <property type="molecule type" value="Genomic_DNA"/>
</dbReference>
<dbReference type="RefSeq" id="XP_011319833.1">
    <property type="nucleotide sequence ID" value="XM_011321531.1"/>
</dbReference>
<dbReference type="SMR" id="Q4I1N3"/>
<dbReference type="FunCoup" id="Q4I1N3">
    <property type="interactions" value="591"/>
</dbReference>
<dbReference type="STRING" id="229533.Q4I1N3"/>
<dbReference type="GeneID" id="23555854"/>
<dbReference type="KEGG" id="fgr:FGSG_08875"/>
<dbReference type="VEuPathDB" id="FungiDB:FGRAMPH1_01G11061"/>
<dbReference type="eggNOG" id="KOG0636">
    <property type="taxonomic scope" value="Eukaryota"/>
</dbReference>
<dbReference type="HOGENOM" id="CLU_022950_0_0_1"/>
<dbReference type="InParanoid" id="Q4I1N3"/>
<dbReference type="OrthoDB" id="52957at110618"/>
<dbReference type="UniPathway" id="UPA00140">
    <property type="reaction ID" value="UER00204"/>
</dbReference>
<dbReference type="Proteomes" id="UP000070720">
    <property type="component" value="Chromosome 2"/>
</dbReference>
<dbReference type="GO" id="GO:0005737">
    <property type="term" value="C:cytoplasm"/>
    <property type="evidence" value="ECO:0007669"/>
    <property type="project" value="UniProtKB-SubCell"/>
</dbReference>
<dbReference type="GO" id="GO:0004020">
    <property type="term" value="F:adenylylsulfate kinase activity"/>
    <property type="evidence" value="ECO:0007669"/>
    <property type="project" value="InterPro"/>
</dbReference>
<dbReference type="GO" id="GO:0005524">
    <property type="term" value="F:ATP binding"/>
    <property type="evidence" value="ECO:0007669"/>
    <property type="project" value="UniProtKB-KW"/>
</dbReference>
<dbReference type="GO" id="GO:0004781">
    <property type="term" value="F:sulfate adenylyltransferase (ATP) activity"/>
    <property type="evidence" value="ECO:0007669"/>
    <property type="project" value="UniProtKB-UniRule"/>
</dbReference>
<dbReference type="GO" id="GO:0019344">
    <property type="term" value="P:cysteine biosynthetic process"/>
    <property type="evidence" value="ECO:0007669"/>
    <property type="project" value="UniProtKB-KW"/>
</dbReference>
<dbReference type="GO" id="GO:0070814">
    <property type="term" value="P:hydrogen sulfide biosynthetic process"/>
    <property type="evidence" value="ECO:0007669"/>
    <property type="project" value="UniProtKB-UniRule"/>
</dbReference>
<dbReference type="GO" id="GO:0009086">
    <property type="term" value="P:methionine biosynthetic process"/>
    <property type="evidence" value="ECO:0007669"/>
    <property type="project" value="UniProtKB-KW"/>
</dbReference>
<dbReference type="GO" id="GO:0010134">
    <property type="term" value="P:sulfate assimilation via adenylyl sulfate reduction"/>
    <property type="evidence" value="ECO:0007669"/>
    <property type="project" value="TreeGrafter"/>
</dbReference>
<dbReference type="GO" id="GO:0019379">
    <property type="term" value="P:sulfate assimilation, phosphoadenylyl sulfate reduction by phosphoadenylyl-sulfate reductase (thioredoxin)"/>
    <property type="evidence" value="ECO:0007669"/>
    <property type="project" value="TreeGrafter"/>
</dbReference>
<dbReference type="CDD" id="cd02027">
    <property type="entry name" value="APSK"/>
    <property type="match status" value="1"/>
</dbReference>
<dbReference type="CDD" id="cd00517">
    <property type="entry name" value="ATPS"/>
    <property type="match status" value="1"/>
</dbReference>
<dbReference type="FunFam" id="3.10.400.10:FF:000003">
    <property type="entry name" value="Sulfate adenylyltransferase"/>
    <property type="match status" value="1"/>
</dbReference>
<dbReference type="FunFam" id="3.40.50.300:FF:000802">
    <property type="entry name" value="Sulfate adenylyltransferase"/>
    <property type="match status" value="1"/>
</dbReference>
<dbReference type="FunFam" id="3.40.50.620:FF:000052">
    <property type="entry name" value="Sulfate adenylyltransferase"/>
    <property type="match status" value="1"/>
</dbReference>
<dbReference type="Gene3D" id="3.40.50.620">
    <property type="entry name" value="HUPs"/>
    <property type="match status" value="1"/>
</dbReference>
<dbReference type="Gene3D" id="3.40.50.300">
    <property type="entry name" value="P-loop containing nucleotide triphosphate hydrolases"/>
    <property type="match status" value="1"/>
</dbReference>
<dbReference type="Gene3D" id="3.10.400.10">
    <property type="entry name" value="Sulfate adenylyltransferase"/>
    <property type="match status" value="1"/>
</dbReference>
<dbReference type="HAMAP" id="MF_03106">
    <property type="entry name" value="Sulf_adenylyltr_euk"/>
    <property type="match status" value="1"/>
</dbReference>
<dbReference type="InterPro" id="IPR002891">
    <property type="entry name" value="APS_kinase"/>
</dbReference>
<dbReference type="InterPro" id="IPR025980">
    <property type="entry name" value="ATP-Sase_PUA-like_dom"/>
</dbReference>
<dbReference type="InterPro" id="IPR027417">
    <property type="entry name" value="P-loop_NTPase"/>
</dbReference>
<dbReference type="InterPro" id="IPR015947">
    <property type="entry name" value="PUA-like_sf"/>
</dbReference>
<dbReference type="InterPro" id="IPR014729">
    <property type="entry name" value="Rossmann-like_a/b/a_fold"/>
</dbReference>
<dbReference type="InterPro" id="IPR027535">
    <property type="entry name" value="Sulf_adenylyltr_euk"/>
</dbReference>
<dbReference type="InterPro" id="IPR050512">
    <property type="entry name" value="Sulf_AdTrans/APS_kinase"/>
</dbReference>
<dbReference type="InterPro" id="IPR024951">
    <property type="entry name" value="Sulfurylase_cat_dom"/>
</dbReference>
<dbReference type="InterPro" id="IPR002650">
    <property type="entry name" value="Sulphate_adenylyltransferase"/>
</dbReference>
<dbReference type="NCBIfam" id="TIGR00455">
    <property type="entry name" value="apsK"/>
    <property type="match status" value="1"/>
</dbReference>
<dbReference type="NCBIfam" id="NF004040">
    <property type="entry name" value="PRK05537.1"/>
    <property type="match status" value="1"/>
</dbReference>
<dbReference type="NCBIfam" id="TIGR00339">
    <property type="entry name" value="sopT"/>
    <property type="match status" value="1"/>
</dbReference>
<dbReference type="PANTHER" id="PTHR42700">
    <property type="entry name" value="SULFATE ADENYLYLTRANSFERASE"/>
    <property type="match status" value="1"/>
</dbReference>
<dbReference type="PANTHER" id="PTHR42700:SF1">
    <property type="entry name" value="SULFATE ADENYLYLTRANSFERASE"/>
    <property type="match status" value="1"/>
</dbReference>
<dbReference type="Pfam" id="PF01583">
    <property type="entry name" value="APS_kinase"/>
    <property type="match status" value="1"/>
</dbReference>
<dbReference type="Pfam" id="PF01747">
    <property type="entry name" value="ATP-sulfurylase"/>
    <property type="match status" value="1"/>
</dbReference>
<dbReference type="Pfam" id="PF14306">
    <property type="entry name" value="PUA_2"/>
    <property type="match status" value="1"/>
</dbReference>
<dbReference type="SUPFAM" id="SSF52374">
    <property type="entry name" value="Nucleotidylyl transferase"/>
    <property type="match status" value="1"/>
</dbReference>
<dbReference type="SUPFAM" id="SSF52540">
    <property type="entry name" value="P-loop containing nucleoside triphosphate hydrolases"/>
    <property type="match status" value="1"/>
</dbReference>
<dbReference type="SUPFAM" id="SSF88697">
    <property type="entry name" value="PUA domain-like"/>
    <property type="match status" value="1"/>
</dbReference>
<name>MET3_GIBZE</name>
<sequence>MANTPHGGVLKDLFARDLPRQSELEAEAQKLPALTLSERHLCDLELILNGGFSPLEGFLTEKDYNGVVENNRLADGALFSMPINLDVNQAEIDQLGLKAGARVTLRDFRDDRNLAILTVEDIYRPDKVNEAKKVFGSDDDTHPGVKYLFDTAKEFYVGGKLEAINRLEHYDFLDLRFTPSELRAHFNKLGWQKVVAFQTRNPMHRAHRELTVRAARSQQANVLIQPVVGLTKPGDIDHFTRVRVYKALLPRYPNGMAALALLPLAMRMGGPREALWHAIIRKNHGATHFIVGRDHAGPGKNKQGKDHYGPYDAQVLVQEHQEELGIKMVEFQAMIYLPDSDEYLPINEIPEGTRTLNISGTELRHRLRTGKDIPEWFSYPEVVKVLREENPLPAEKGFTVFMTGYQNSGKDQIARALQATLNQGGGRPVSMLLGENVRHELSPELGFTRKDRDLNIQRIAFVASELTKAGAAVIAAPIAPFEDARKAARDLVEKSGPFFLVHVATPLEYCEKTDRKGVYAAARNGEIKNFTGVDDPYEAPAKPDLVVDLEKQNVRSIVHQIVLLLESNGLLDRL</sequence>